<evidence type="ECO:0000255" key="1">
    <source>
        <dbReference type="HAMAP-Rule" id="MF_01366"/>
    </source>
</evidence>
<evidence type="ECO:0000305" key="2"/>
<protein>
    <recommendedName>
        <fullName evidence="1">Large ribosomal subunit protein uL13</fullName>
    </recommendedName>
    <alternativeName>
        <fullName evidence="2">50S ribosomal protein L13</fullName>
    </alternativeName>
</protein>
<sequence length="142" mass="16033">MKTFTAKPETVKRDWYVVDATGKTLGRLATELARRLRGKHKAEYTPHVDTGDYIIVLNADKVAVTGNKRTDKVYYHHTGHIGGIKQVSFEEMIARRPERVIEIAVKGMLPKGPLGRAMFRKLKVYAGNEHNHAAQQPQVLDI</sequence>
<dbReference type="EMBL" id="CP000038">
    <property type="protein sequence ID" value="AAZ89945.1"/>
    <property type="molecule type" value="Genomic_DNA"/>
</dbReference>
<dbReference type="RefSeq" id="WP_005140285.1">
    <property type="nucleotide sequence ID" value="NC_007384.1"/>
</dbReference>
<dbReference type="SMR" id="Q3YX17"/>
<dbReference type="GeneID" id="93778755"/>
<dbReference type="KEGG" id="ssn:SSON_3372"/>
<dbReference type="HOGENOM" id="CLU_082184_2_2_6"/>
<dbReference type="Proteomes" id="UP000002529">
    <property type="component" value="Chromosome"/>
</dbReference>
<dbReference type="GO" id="GO:0022625">
    <property type="term" value="C:cytosolic large ribosomal subunit"/>
    <property type="evidence" value="ECO:0007669"/>
    <property type="project" value="TreeGrafter"/>
</dbReference>
<dbReference type="GO" id="GO:0003729">
    <property type="term" value="F:mRNA binding"/>
    <property type="evidence" value="ECO:0007669"/>
    <property type="project" value="TreeGrafter"/>
</dbReference>
<dbReference type="GO" id="GO:0003735">
    <property type="term" value="F:structural constituent of ribosome"/>
    <property type="evidence" value="ECO:0007669"/>
    <property type="project" value="InterPro"/>
</dbReference>
<dbReference type="GO" id="GO:0017148">
    <property type="term" value="P:negative regulation of translation"/>
    <property type="evidence" value="ECO:0007669"/>
    <property type="project" value="TreeGrafter"/>
</dbReference>
<dbReference type="GO" id="GO:0006412">
    <property type="term" value="P:translation"/>
    <property type="evidence" value="ECO:0007669"/>
    <property type="project" value="UniProtKB-UniRule"/>
</dbReference>
<dbReference type="CDD" id="cd00392">
    <property type="entry name" value="Ribosomal_L13"/>
    <property type="match status" value="1"/>
</dbReference>
<dbReference type="FunFam" id="3.90.1180.10:FF:000001">
    <property type="entry name" value="50S ribosomal protein L13"/>
    <property type="match status" value="1"/>
</dbReference>
<dbReference type="Gene3D" id="3.90.1180.10">
    <property type="entry name" value="Ribosomal protein L13"/>
    <property type="match status" value="1"/>
</dbReference>
<dbReference type="HAMAP" id="MF_01366">
    <property type="entry name" value="Ribosomal_uL13"/>
    <property type="match status" value="1"/>
</dbReference>
<dbReference type="InterPro" id="IPR005822">
    <property type="entry name" value="Ribosomal_uL13"/>
</dbReference>
<dbReference type="InterPro" id="IPR005823">
    <property type="entry name" value="Ribosomal_uL13_bac-type"/>
</dbReference>
<dbReference type="InterPro" id="IPR023563">
    <property type="entry name" value="Ribosomal_uL13_CS"/>
</dbReference>
<dbReference type="InterPro" id="IPR036899">
    <property type="entry name" value="Ribosomal_uL13_sf"/>
</dbReference>
<dbReference type="NCBIfam" id="TIGR01066">
    <property type="entry name" value="rplM_bact"/>
    <property type="match status" value="1"/>
</dbReference>
<dbReference type="PANTHER" id="PTHR11545:SF2">
    <property type="entry name" value="LARGE RIBOSOMAL SUBUNIT PROTEIN UL13M"/>
    <property type="match status" value="1"/>
</dbReference>
<dbReference type="PANTHER" id="PTHR11545">
    <property type="entry name" value="RIBOSOMAL PROTEIN L13"/>
    <property type="match status" value="1"/>
</dbReference>
<dbReference type="Pfam" id="PF00572">
    <property type="entry name" value="Ribosomal_L13"/>
    <property type="match status" value="1"/>
</dbReference>
<dbReference type="PIRSF" id="PIRSF002181">
    <property type="entry name" value="Ribosomal_L13"/>
    <property type="match status" value="1"/>
</dbReference>
<dbReference type="SUPFAM" id="SSF52161">
    <property type="entry name" value="Ribosomal protein L13"/>
    <property type="match status" value="1"/>
</dbReference>
<dbReference type="PROSITE" id="PS00783">
    <property type="entry name" value="RIBOSOMAL_L13"/>
    <property type="match status" value="1"/>
</dbReference>
<gene>
    <name evidence="1" type="primary">rplM</name>
    <name type="ordered locus">SSON_3372</name>
</gene>
<proteinExistence type="inferred from homology"/>
<organism>
    <name type="scientific">Shigella sonnei (strain Ss046)</name>
    <dbReference type="NCBI Taxonomy" id="300269"/>
    <lineage>
        <taxon>Bacteria</taxon>
        <taxon>Pseudomonadati</taxon>
        <taxon>Pseudomonadota</taxon>
        <taxon>Gammaproteobacteria</taxon>
        <taxon>Enterobacterales</taxon>
        <taxon>Enterobacteriaceae</taxon>
        <taxon>Shigella</taxon>
    </lineage>
</organism>
<accession>Q3YX17</accession>
<reference key="1">
    <citation type="journal article" date="2005" name="Nucleic Acids Res.">
        <title>Genome dynamics and diversity of Shigella species, the etiologic agents of bacillary dysentery.</title>
        <authorList>
            <person name="Yang F."/>
            <person name="Yang J."/>
            <person name="Zhang X."/>
            <person name="Chen L."/>
            <person name="Jiang Y."/>
            <person name="Yan Y."/>
            <person name="Tang X."/>
            <person name="Wang J."/>
            <person name="Xiong Z."/>
            <person name="Dong J."/>
            <person name="Xue Y."/>
            <person name="Zhu Y."/>
            <person name="Xu X."/>
            <person name="Sun L."/>
            <person name="Chen S."/>
            <person name="Nie H."/>
            <person name="Peng J."/>
            <person name="Xu J."/>
            <person name="Wang Y."/>
            <person name="Yuan Z."/>
            <person name="Wen Y."/>
            <person name="Yao Z."/>
            <person name="Shen Y."/>
            <person name="Qiang B."/>
            <person name="Hou Y."/>
            <person name="Yu J."/>
            <person name="Jin Q."/>
        </authorList>
    </citation>
    <scope>NUCLEOTIDE SEQUENCE [LARGE SCALE GENOMIC DNA]</scope>
    <source>
        <strain>Ss046</strain>
    </source>
</reference>
<keyword id="KW-1185">Reference proteome</keyword>
<keyword id="KW-0687">Ribonucleoprotein</keyword>
<keyword id="KW-0689">Ribosomal protein</keyword>
<name>RL13_SHISS</name>
<feature type="chain" id="PRO_0000261800" description="Large ribosomal subunit protein uL13">
    <location>
        <begin position="1"/>
        <end position="142"/>
    </location>
</feature>
<comment type="function">
    <text evidence="1">This protein is one of the early assembly proteins of the 50S ribosomal subunit, although it is not seen to bind rRNA by itself. It is important during the early stages of 50S assembly.</text>
</comment>
<comment type="subunit">
    <text evidence="1">Part of the 50S ribosomal subunit.</text>
</comment>
<comment type="similarity">
    <text evidence="1">Belongs to the universal ribosomal protein uL13 family.</text>
</comment>